<gene>
    <name type="ordered locus">YDL007C-A</name>
</gene>
<keyword id="KW-1185">Reference proteome</keyword>
<dbReference type="EMBL" id="Z74056">
    <property type="status" value="NOT_ANNOTATED_CDS"/>
    <property type="molecule type" value="Genomic_DNA"/>
</dbReference>
<dbReference type="EMBL" id="BK006938">
    <property type="protein sequence ID" value="DAA11840.1"/>
    <property type="molecule type" value="Genomic_DNA"/>
</dbReference>
<dbReference type="RefSeq" id="NP_001032574.1">
    <property type="nucleotide sequence ID" value="NM_001184682.1"/>
</dbReference>
<dbReference type="SMR" id="Q2V2Q0"/>
<dbReference type="FunCoup" id="Q2V2Q0">
    <property type="interactions" value="4"/>
</dbReference>
<dbReference type="STRING" id="4932.YDL007C-A"/>
<dbReference type="PaxDb" id="4932-YDL007C-A"/>
<dbReference type="EnsemblFungi" id="YDL007C-A_mRNA">
    <property type="protein sequence ID" value="YDL007C-A"/>
    <property type="gene ID" value="YDL007C-A"/>
</dbReference>
<dbReference type="GeneID" id="3799969"/>
<dbReference type="KEGG" id="sce:YDL007C-A"/>
<dbReference type="AGR" id="SGD:S000113557"/>
<dbReference type="SGD" id="S000113557">
    <property type="gene designation" value="YDL007C-A"/>
</dbReference>
<dbReference type="VEuPathDB" id="FungiDB:YDL007C-A"/>
<dbReference type="HOGENOM" id="CLU_2513909_0_0_1"/>
<dbReference type="InParanoid" id="Q2V2Q0"/>
<dbReference type="OrthoDB" id="4056318at2759"/>
<dbReference type="BioCyc" id="YEAST:G3O-30128-MONOMER"/>
<dbReference type="BioGRID-ORCS" id="3799969">
    <property type="hits" value="0 hits in 10 CRISPR screens"/>
</dbReference>
<dbReference type="PRO" id="PR:Q2V2Q0"/>
<dbReference type="Proteomes" id="UP000002311">
    <property type="component" value="Chromosome IV"/>
</dbReference>
<dbReference type="RNAct" id="Q2V2Q0">
    <property type="molecule type" value="protein"/>
</dbReference>
<feature type="chain" id="PRO_0000248455" description="Putative uncharacterized protein YDL007C-A">
    <location>
        <begin position="1"/>
        <end position="85"/>
    </location>
</feature>
<sequence length="85" mass="9633">MFLPIIFHTILTLLNFGKYYCLPIQEDDDKSGKEIEQILDNNIESLGLLLNSMSLSSNFTTGDPELDSLFQDDLIPELYSVLDGF</sequence>
<proteinExistence type="predicted"/>
<name>YD007_YEAST</name>
<protein>
    <recommendedName>
        <fullName>Putative uncharacterized protein YDL007C-A</fullName>
    </recommendedName>
</protein>
<organism>
    <name type="scientific">Saccharomyces cerevisiae (strain ATCC 204508 / S288c)</name>
    <name type="common">Baker's yeast</name>
    <dbReference type="NCBI Taxonomy" id="559292"/>
    <lineage>
        <taxon>Eukaryota</taxon>
        <taxon>Fungi</taxon>
        <taxon>Dikarya</taxon>
        <taxon>Ascomycota</taxon>
        <taxon>Saccharomycotina</taxon>
        <taxon>Saccharomycetes</taxon>
        <taxon>Saccharomycetales</taxon>
        <taxon>Saccharomycetaceae</taxon>
        <taxon>Saccharomyces</taxon>
    </lineage>
</organism>
<accession>Q2V2Q0</accession>
<accession>D6VRY0</accession>
<reference key="1">
    <citation type="journal article" date="1997" name="Nature">
        <title>The nucleotide sequence of Saccharomyces cerevisiae chromosome IV.</title>
        <authorList>
            <person name="Jacq C."/>
            <person name="Alt-Moerbe J."/>
            <person name="Andre B."/>
            <person name="Arnold W."/>
            <person name="Bahr A."/>
            <person name="Ballesta J.P.G."/>
            <person name="Bargues M."/>
            <person name="Baron L."/>
            <person name="Becker A."/>
            <person name="Biteau N."/>
            <person name="Bloecker H."/>
            <person name="Blugeon C."/>
            <person name="Boskovic J."/>
            <person name="Brandt P."/>
            <person name="Brueckner M."/>
            <person name="Buitrago M.J."/>
            <person name="Coster F."/>
            <person name="Delaveau T."/>
            <person name="del Rey F."/>
            <person name="Dujon B."/>
            <person name="Eide L.G."/>
            <person name="Garcia-Cantalejo J.M."/>
            <person name="Goffeau A."/>
            <person name="Gomez-Peris A."/>
            <person name="Granotier C."/>
            <person name="Hanemann V."/>
            <person name="Hankeln T."/>
            <person name="Hoheisel J.D."/>
            <person name="Jaeger W."/>
            <person name="Jimenez A."/>
            <person name="Jonniaux J.-L."/>
            <person name="Kraemer C."/>
            <person name="Kuester H."/>
            <person name="Laamanen P."/>
            <person name="Legros Y."/>
            <person name="Louis E.J."/>
            <person name="Moeller-Rieker S."/>
            <person name="Monnet A."/>
            <person name="Moro M."/>
            <person name="Mueller-Auer S."/>
            <person name="Nussbaumer B."/>
            <person name="Paricio N."/>
            <person name="Paulin L."/>
            <person name="Perea J."/>
            <person name="Perez-Alonso M."/>
            <person name="Perez-Ortin J.E."/>
            <person name="Pohl T.M."/>
            <person name="Prydz H."/>
            <person name="Purnelle B."/>
            <person name="Rasmussen S.W."/>
            <person name="Remacha M.A."/>
            <person name="Revuelta J.L."/>
            <person name="Rieger M."/>
            <person name="Salom D."/>
            <person name="Saluz H.P."/>
            <person name="Saiz J.E."/>
            <person name="Saren A.-M."/>
            <person name="Schaefer M."/>
            <person name="Scharfe M."/>
            <person name="Schmidt E.R."/>
            <person name="Schneider C."/>
            <person name="Scholler P."/>
            <person name="Schwarz S."/>
            <person name="Soler-Mira A."/>
            <person name="Urrestarazu L.A."/>
            <person name="Verhasselt P."/>
            <person name="Vissers S."/>
            <person name="Voet M."/>
            <person name="Volckaert G."/>
            <person name="Wagner G."/>
            <person name="Wambutt R."/>
            <person name="Wedler E."/>
            <person name="Wedler H."/>
            <person name="Woelfl S."/>
            <person name="Harris D.E."/>
            <person name="Bowman S."/>
            <person name="Brown D."/>
            <person name="Churcher C.M."/>
            <person name="Connor R."/>
            <person name="Dedman K."/>
            <person name="Gentles S."/>
            <person name="Hamlin N."/>
            <person name="Hunt S."/>
            <person name="Jones L."/>
            <person name="McDonald S."/>
            <person name="Murphy L.D."/>
            <person name="Niblett D."/>
            <person name="Odell C."/>
            <person name="Oliver K."/>
            <person name="Rajandream M.A."/>
            <person name="Richards C."/>
            <person name="Shore L."/>
            <person name="Walsh S.V."/>
            <person name="Barrell B.G."/>
            <person name="Dietrich F.S."/>
            <person name="Mulligan J.T."/>
            <person name="Allen E."/>
            <person name="Araujo R."/>
            <person name="Aviles E."/>
            <person name="Berno A."/>
            <person name="Carpenter J."/>
            <person name="Chen E."/>
            <person name="Cherry J.M."/>
            <person name="Chung E."/>
            <person name="Duncan M."/>
            <person name="Hunicke-Smith S."/>
            <person name="Hyman R.W."/>
            <person name="Komp C."/>
            <person name="Lashkari D."/>
            <person name="Lew H."/>
            <person name="Lin D."/>
            <person name="Mosedale D."/>
            <person name="Nakahara K."/>
            <person name="Namath A."/>
            <person name="Oefner P."/>
            <person name="Oh C."/>
            <person name="Petel F.X."/>
            <person name="Roberts D."/>
            <person name="Schramm S."/>
            <person name="Schroeder M."/>
            <person name="Shogren T."/>
            <person name="Shroff N."/>
            <person name="Winant A."/>
            <person name="Yelton M.A."/>
            <person name="Botstein D."/>
            <person name="Davis R.W."/>
            <person name="Johnston M."/>
            <person name="Andrews S."/>
            <person name="Brinkman R."/>
            <person name="Cooper J."/>
            <person name="Ding H."/>
            <person name="Du Z."/>
            <person name="Favello A."/>
            <person name="Fulton L."/>
            <person name="Gattung S."/>
            <person name="Greco T."/>
            <person name="Hallsworth K."/>
            <person name="Hawkins J."/>
            <person name="Hillier L.W."/>
            <person name="Jier M."/>
            <person name="Johnson D."/>
            <person name="Johnston L."/>
            <person name="Kirsten J."/>
            <person name="Kucaba T."/>
            <person name="Langston Y."/>
            <person name="Latreille P."/>
            <person name="Le T."/>
            <person name="Mardis E."/>
            <person name="Menezes S."/>
            <person name="Miller N."/>
            <person name="Nhan M."/>
            <person name="Pauley A."/>
            <person name="Peluso D."/>
            <person name="Rifkin L."/>
            <person name="Riles L."/>
            <person name="Taich A."/>
            <person name="Trevaskis E."/>
            <person name="Vignati D."/>
            <person name="Wilcox L."/>
            <person name="Wohldman P."/>
            <person name="Vaudin M."/>
            <person name="Wilson R."/>
            <person name="Waterston R."/>
            <person name="Albermann K."/>
            <person name="Hani J."/>
            <person name="Heumann K."/>
            <person name="Kleine K."/>
            <person name="Mewes H.-W."/>
            <person name="Zollner A."/>
            <person name="Zaccaria P."/>
        </authorList>
    </citation>
    <scope>NUCLEOTIDE SEQUENCE [LARGE SCALE GENOMIC DNA]</scope>
    <source>
        <strain>ATCC 204508 / S288c</strain>
    </source>
</reference>
<reference key="2">
    <citation type="journal article" date="2014" name="G3 (Bethesda)">
        <title>The reference genome sequence of Saccharomyces cerevisiae: Then and now.</title>
        <authorList>
            <person name="Engel S.R."/>
            <person name="Dietrich F.S."/>
            <person name="Fisk D.G."/>
            <person name="Binkley G."/>
            <person name="Balakrishnan R."/>
            <person name="Costanzo M.C."/>
            <person name="Dwight S.S."/>
            <person name="Hitz B.C."/>
            <person name="Karra K."/>
            <person name="Nash R.S."/>
            <person name="Weng S."/>
            <person name="Wong E.D."/>
            <person name="Lloyd P."/>
            <person name="Skrzypek M.S."/>
            <person name="Miyasato S.R."/>
            <person name="Simison M."/>
            <person name="Cherry J.M."/>
        </authorList>
    </citation>
    <scope>GENOME REANNOTATION</scope>
    <source>
        <strain>ATCC 204508 / S288c</strain>
    </source>
</reference>
<reference key="3">
    <citation type="journal article" date="2003" name="Science">
        <title>Finding functional features in Saccharomyces genomes by phylogenetic footprinting.</title>
        <authorList>
            <person name="Cliften P.F."/>
            <person name="Sudarsanam P."/>
            <person name="Desikan A."/>
            <person name="Fulton L."/>
            <person name="Fulton B."/>
            <person name="Majors J."/>
            <person name="Waterston R."/>
            <person name="Cohen B.A."/>
            <person name="Johnston M."/>
        </authorList>
    </citation>
    <scope>GENOME REANNOTATION</scope>
</reference>